<keyword id="KW-1185">Reference proteome</keyword>
<reference key="1">
    <citation type="journal article" date="2010" name="PLoS ONE">
        <title>Genome sequence of Cronobacter sakazakii BAA-894 and comparative genomic hybridization analysis with other Cronobacter species.</title>
        <authorList>
            <person name="Kucerova E."/>
            <person name="Clifton S.W."/>
            <person name="Xia X.Q."/>
            <person name="Long F."/>
            <person name="Porwollik S."/>
            <person name="Fulton L."/>
            <person name="Fronick C."/>
            <person name="Minx P."/>
            <person name="Kyung K."/>
            <person name="Warren W."/>
            <person name="Fulton R."/>
            <person name="Feng D."/>
            <person name="Wollam A."/>
            <person name="Shah N."/>
            <person name="Bhonagiri V."/>
            <person name="Nash W.E."/>
            <person name="Hallsworth-Pepin K."/>
            <person name="Wilson R.K."/>
            <person name="McClelland M."/>
            <person name="Forsythe S.J."/>
        </authorList>
    </citation>
    <scope>NUCLEOTIDE SEQUENCE [LARGE SCALE GENOMIC DNA]</scope>
    <source>
        <strain>ATCC BAA-894</strain>
    </source>
</reference>
<protein>
    <recommendedName>
        <fullName evidence="1">UPF0352 protein ESA_01049</fullName>
    </recommendedName>
</protein>
<proteinExistence type="inferred from homology"/>
<feature type="chain" id="PRO_1000062305" description="UPF0352 protein ESA_01049">
    <location>
        <begin position="1"/>
        <end position="75"/>
    </location>
</feature>
<dbReference type="EMBL" id="CP000783">
    <property type="protein sequence ID" value="ABU76317.1"/>
    <property type="molecule type" value="Genomic_DNA"/>
</dbReference>
<dbReference type="RefSeq" id="WP_004387431.1">
    <property type="nucleotide sequence ID" value="NC_009778.1"/>
</dbReference>
<dbReference type="SMR" id="A7MLM8"/>
<dbReference type="KEGG" id="esa:ESA_01049"/>
<dbReference type="HOGENOM" id="CLU_175457_0_0_6"/>
<dbReference type="Proteomes" id="UP000000260">
    <property type="component" value="Chromosome"/>
</dbReference>
<dbReference type="Gene3D" id="1.10.3390.10">
    <property type="entry name" value="YejL-like"/>
    <property type="match status" value="1"/>
</dbReference>
<dbReference type="HAMAP" id="MF_00816">
    <property type="entry name" value="UPF0352"/>
    <property type="match status" value="1"/>
</dbReference>
<dbReference type="InterPro" id="IPR009857">
    <property type="entry name" value="UPF0352"/>
</dbReference>
<dbReference type="InterPro" id="IPR023202">
    <property type="entry name" value="YejL_sf"/>
</dbReference>
<dbReference type="NCBIfam" id="NF010242">
    <property type="entry name" value="PRK13689.1"/>
    <property type="match status" value="1"/>
</dbReference>
<dbReference type="Pfam" id="PF07208">
    <property type="entry name" value="DUF1414"/>
    <property type="match status" value="1"/>
</dbReference>
<dbReference type="PIRSF" id="PIRSF006188">
    <property type="entry name" value="UCP006188"/>
    <property type="match status" value="1"/>
</dbReference>
<dbReference type="SUPFAM" id="SSF158651">
    <property type="entry name" value="YejL-like"/>
    <property type="match status" value="1"/>
</dbReference>
<evidence type="ECO:0000255" key="1">
    <source>
        <dbReference type="HAMAP-Rule" id="MF_00816"/>
    </source>
</evidence>
<organism>
    <name type="scientific">Cronobacter sakazakii (strain ATCC BAA-894)</name>
    <name type="common">Enterobacter sakazakii</name>
    <dbReference type="NCBI Taxonomy" id="290339"/>
    <lineage>
        <taxon>Bacteria</taxon>
        <taxon>Pseudomonadati</taxon>
        <taxon>Pseudomonadota</taxon>
        <taxon>Gammaproteobacteria</taxon>
        <taxon>Enterobacterales</taxon>
        <taxon>Enterobacteriaceae</taxon>
        <taxon>Cronobacter</taxon>
    </lineage>
</organism>
<comment type="similarity">
    <text evidence="1">Belongs to the UPF0352 family.</text>
</comment>
<accession>A7MLM8</accession>
<gene>
    <name type="ordered locus">ESA_01049</name>
</gene>
<sequence>MPQLSRYSDERVEELLTELASVLSKHKAPTDLSLMVLGNMVTNVINNSVAPAQRKTLARSFAEALQSSIRDDNAH</sequence>
<name>Y1049_CROS8</name>